<sequence>MITLDRPTLTARALEDLTASALVVGVGTGPDGPVLLTDALPAEAATALEASFELLGVRGAEDEVHRLPGLGGVPVPLLVLAGVGGLDDDGEASDESLRRAAGAAVRSLAGTDAVALALPADTPARLAAVAEGAVLGAYAFTAQKSECARAEADSSRPVRELEVVTPLAAADADPVLRRAAVVGDAVCAVRDLVNTAPSHLYPATFADAVAEDLADSPVSVDVWDEDRLRAEGFGGILAIGQGSSRPPRLVRIEHAPADAAAHIALVGKGITFDTGGISLKPAASMMTMKSDMAGAATVFAVVRAAAALDVPVKVTGWLALAENMPSGTAIRPSDVITMYGGKTVEVMNTDAEGRVVMADALVAATNEHPDAVLDVATLTGAQLVALGVRHTGVMGDDALRDEAVAAADAAGELAWGMPLPEQLRASLTSRVADISNMGDRFGGMMTAATFLREFVDAGRPQDDDAARTPWAHLDIAGPSFNESAAYGYTPQDATGVMVRTLVGLIEGRAR</sequence>
<proteinExistence type="inferred from homology"/>
<reference key="1">
    <citation type="journal article" date="2010" name="J. Bacteriol.">
        <title>Genome sequence of the Fleming strain of Micrococcus luteus, a simple free-living actinobacterium.</title>
        <authorList>
            <person name="Young M."/>
            <person name="Artsatbanov V."/>
            <person name="Beller H.R."/>
            <person name="Chandra G."/>
            <person name="Chater K.F."/>
            <person name="Dover L.G."/>
            <person name="Goh E.B."/>
            <person name="Kahan T."/>
            <person name="Kaprelyants A.S."/>
            <person name="Kyrpides N."/>
            <person name="Lapidus A."/>
            <person name="Lowry S.R."/>
            <person name="Lykidis A."/>
            <person name="Mahillon J."/>
            <person name="Markowitz V."/>
            <person name="Mavromatis K."/>
            <person name="Mukamolova G.V."/>
            <person name="Oren A."/>
            <person name="Rokem J.S."/>
            <person name="Smith M.C."/>
            <person name="Young D.I."/>
            <person name="Greenblatt C.L."/>
        </authorList>
    </citation>
    <scope>NUCLEOTIDE SEQUENCE [LARGE SCALE GENOMIC DNA]</scope>
    <source>
        <strain>ATCC 4698 / DSM 20030 / JCM 1464 / CCM 169 / CCUG 5858 / IAM 1056 / NBRC 3333 / NCIMB 9278 / NCTC 2665 / VKM Ac-2230</strain>
    </source>
</reference>
<protein>
    <recommendedName>
        <fullName evidence="1">Probable cytosol aminopeptidase</fullName>
        <ecNumber evidence="1">3.4.11.1</ecNumber>
    </recommendedName>
    <alternativeName>
        <fullName evidence="1">Leucine aminopeptidase</fullName>
        <shortName evidence="1">LAP</shortName>
        <ecNumber evidence="1">3.4.11.10</ecNumber>
    </alternativeName>
    <alternativeName>
        <fullName evidence="1">Leucyl aminopeptidase</fullName>
    </alternativeName>
</protein>
<dbReference type="EC" id="3.4.11.1" evidence="1"/>
<dbReference type="EC" id="3.4.11.10" evidence="1"/>
<dbReference type="EMBL" id="CP001628">
    <property type="protein sequence ID" value="ACS30836.1"/>
    <property type="molecule type" value="Genomic_DNA"/>
</dbReference>
<dbReference type="RefSeq" id="WP_010078530.1">
    <property type="nucleotide sequence ID" value="NC_012803.1"/>
</dbReference>
<dbReference type="SMR" id="C5CCM4"/>
<dbReference type="STRING" id="465515.Mlut_13310"/>
<dbReference type="EnsemblBacteria" id="ACS30836">
    <property type="protein sequence ID" value="ACS30836"/>
    <property type="gene ID" value="Mlut_13310"/>
</dbReference>
<dbReference type="GeneID" id="93343214"/>
<dbReference type="KEGG" id="mlu:Mlut_13310"/>
<dbReference type="PATRIC" id="fig|465515.4.peg.1273"/>
<dbReference type="eggNOG" id="COG0260">
    <property type="taxonomic scope" value="Bacteria"/>
</dbReference>
<dbReference type="HOGENOM" id="CLU_013734_2_2_11"/>
<dbReference type="Proteomes" id="UP000000738">
    <property type="component" value="Chromosome"/>
</dbReference>
<dbReference type="GO" id="GO:0005737">
    <property type="term" value="C:cytoplasm"/>
    <property type="evidence" value="ECO:0007669"/>
    <property type="project" value="UniProtKB-SubCell"/>
</dbReference>
<dbReference type="GO" id="GO:0030145">
    <property type="term" value="F:manganese ion binding"/>
    <property type="evidence" value="ECO:0007669"/>
    <property type="project" value="UniProtKB-UniRule"/>
</dbReference>
<dbReference type="GO" id="GO:0070006">
    <property type="term" value="F:metalloaminopeptidase activity"/>
    <property type="evidence" value="ECO:0007669"/>
    <property type="project" value="InterPro"/>
</dbReference>
<dbReference type="GO" id="GO:0006508">
    <property type="term" value="P:proteolysis"/>
    <property type="evidence" value="ECO:0007669"/>
    <property type="project" value="UniProtKB-KW"/>
</dbReference>
<dbReference type="CDD" id="cd00433">
    <property type="entry name" value="Peptidase_M17"/>
    <property type="match status" value="1"/>
</dbReference>
<dbReference type="Gene3D" id="3.40.220.10">
    <property type="entry name" value="Leucine Aminopeptidase, subunit E, domain 1"/>
    <property type="match status" value="1"/>
</dbReference>
<dbReference type="Gene3D" id="3.40.630.10">
    <property type="entry name" value="Zn peptidases"/>
    <property type="match status" value="1"/>
</dbReference>
<dbReference type="HAMAP" id="MF_00181">
    <property type="entry name" value="Cytosol_peptidase_M17"/>
    <property type="match status" value="1"/>
</dbReference>
<dbReference type="InterPro" id="IPR011356">
    <property type="entry name" value="Leucine_aapep/pepB"/>
</dbReference>
<dbReference type="InterPro" id="IPR043472">
    <property type="entry name" value="Macro_dom-like"/>
</dbReference>
<dbReference type="InterPro" id="IPR000819">
    <property type="entry name" value="Peptidase_M17_C"/>
</dbReference>
<dbReference type="InterPro" id="IPR023042">
    <property type="entry name" value="Peptidase_M17_leu_NH2_pept"/>
</dbReference>
<dbReference type="InterPro" id="IPR008283">
    <property type="entry name" value="Peptidase_M17_N"/>
</dbReference>
<dbReference type="NCBIfam" id="NF002073">
    <property type="entry name" value="PRK00913.1-2"/>
    <property type="match status" value="1"/>
</dbReference>
<dbReference type="PANTHER" id="PTHR11963:SF23">
    <property type="entry name" value="CYTOSOL AMINOPEPTIDASE"/>
    <property type="match status" value="1"/>
</dbReference>
<dbReference type="PANTHER" id="PTHR11963">
    <property type="entry name" value="LEUCINE AMINOPEPTIDASE-RELATED"/>
    <property type="match status" value="1"/>
</dbReference>
<dbReference type="Pfam" id="PF00883">
    <property type="entry name" value="Peptidase_M17"/>
    <property type="match status" value="1"/>
</dbReference>
<dbReference type="Pfam" id="PF02789">
    <property type="entry name" value="Peptidase_M17_N"/>
    <property type="match status" value="1"/>
</dbReference>
<dbReference type="PRINTS" id="PR00481">
    <property type="entry name" value="LAMNOPPTDASE"/>
</dbReference>
<dbReference type="SUPFAM" id="SSF52949">
    <property type="entry name" value="Macro domain-like"/>
    <property type="match status" value="1"/>
</dbReference>
<dbReference type="SUPFAM" id="SSF53187">
    <property type="entry name" value="Zn-dependent exopeptidases"/>
    <property type="match status" value="1"/>
</dbReference>
<dbReference type="PROSITE" id="PS00631">
    <property type="entry name" value="CYTOSOL_AP"/>
    <property type="match status" value="1"/>
</dbReference>
<keyword id="KW-0031">Aminopeptidase</keyword>
<keyword id="KW-0963">Cytoplasm</keyword>
<keyword id="KW-0378">Hydrolase</keyword>
<keyword id="KW-0464">Manganese</keyword>
<keyword id="KW-0479">Metal-binding</keyword>
<keyword id="KW-0645">Protease</keyword>
<keyword id="KW-1185">Reference proteome</keyword>
<name>AMPA_MICLC</name>
<comment type="function">
    <text evidence="1">Presumably involved in the processing and regular turnover of intracellular proteins. Catalyzes the removal of unsubstituted N-terminal amino acids from various peptides.</text>
</comment>
<comment type="catalytic activity">
    <reaction evidence="1">
        <text>Release of an N-terminal amino acid, Xaa-|-Yaa-, in which Xaa is preferably Leu, but may be other amino acids including Pro although not Arg or Lys, and Yaa may be Pro. Amino acid amides and methyl esters are also readily hydrolyzed, but rates on arylamides are exceedingly low.</text>
        <dbReference type="EC" id="3.4.11.1"/>
    </reaction>
</comment>
<comment type="catalytic activity">
    <reaction evidence="1">
        <text>Release of an N-terminal amino acid, preferentially leucine, but not glutamic or aspartic acids.</text>
        <dbReference type="EC" id="3.4.11.10"/>
    </reaction>
</comment>
<comment type="cofactor">
    <cofactor evidence="1">
        <name>Mn(2+)</name>
        <dbReference type="ChEBI" id="CHEBI:29035"/>
    </cofactor>
    <text evidence="1">Binds 2 manganese ions per subunit.</text>
</comment>
<comment type="subcellular location">
    <subcellularLocation>
        <location evidence="1">Cytoplasm</location>
    </subcellularLocation>
</comment>
<comment type="similarity">
    <text evidence="1">Belongs to the peptidase M17 family.</text>
</comment>
<evidence type="ECO:0000255" key="1">
    <source>
        <dbReference type="HAMAP-Rule" id="MF_00181"/>
    </source>
</evidence>
<gene>
    <name evidence="1" type="primary">pepA</name>
    <name type="ordered locus">Mlut_13310</name>
</gene>
<accession>C5CCM4</accession>
<organism>
    <name type="scientific">Micrococcus luteus (strain ATCC 4698 / DSM 20030 / JCM 1464 / CCM 169 / CCUG 5858 / IAM 1056 / NBRC 3333 / NCIMB 9278 / NCTC 2665 / VKM Ac-2230)</name>
    <name type="common">Micrococcus lysodeikticus</name>
    <dbReference type="NCBI Taxonomy" id="465515"/>
    <lineage>
        <taxon>Bacteria</taxon>
        <taxon>Bacillati</taxon>
        <taxon>Actinomycetota</taxon>
        <taxon>Actinomycetes</taxon>
        <taxon>Micrococcales</taxon>
        <taxon>Micrococcaceae</taxon>
        <taxon>Micrococcus</taxon>
    </lineage>
</organism>
<feature type="chain" id="PRO_1000203835" description="Probable cytosol aminopeptidase">
    <location>
        <begin position="1"/>
        <end position="510"/>
    </location>
</feature>
<feature type="active site" evidence="1">
    <location>
        <position position="280"/>
    </location>
</feature>
<feature type="active site" evidence="1">
    <location>
        <position position="354"/>
    </location>
</feature>
<feature type="binding site" evidence="1">
    <location>
        <position position="268"/>
    </location>
    <ligand>
        <name>Mn(2+)</name>
        <dbReference type="ChEBI" id="CHEBI:29035"/>
        <label>2</label>
    </ligand>
</feature>
<feature type="binding site" evidence="1">
    <location>
        <position position="273"/>
    </location>
    <ligand>
        <name>Mn(2+)</name>
        <dbReference type="ChEBI" id="CHEBI:29035"/>
        <label>1</label>
    </ligand>
</feature>
<feature type="binding site" evidence="1">
    <location>
        <position position="273"/>
    </location>
    <ligand>
        <name>Mn(2+)</name>
        <dbReference type="ChEBI" id="CHEBI:29035"/>
        <label>2</label>
    </ligand>
</feature>
<feature type="binding site" evidence="1">
    <location>
        <position position="291"/>
    </location>
    <ligand>
        <name>Mn(2+)</name>
        <dbReference type="ChEBI" id="CHEBI:29035"/>
        <label>2</label>
    </ligand>
</feature>
<feature type="binding site" evidence="1">
    <location>
        <position position="350"/>
    </location>
    <ligand>
        <name>Mn(2+)</name>
        <dbReference type="ChEBI" id="CHEBI:29035"/>
        <label>1</label>
    </ligand>
</feature>
<feature type="binding site" evidence="1">
    <location>
        <position position="352"/>
    </location>
    <ligand>
        <name>Mn(2+)</name>
        <dbReference type="ChEBI" id="CHEBI:29035"/>
        <label>1</label>
    </ligand>
</feature>
<feature type="binding site" evidence="1">
    <location>
        <position position="352"/>
    </location>
    <ligand>
        <name>Mn(2+)</name>
        <dbReference type="ChEBI" id="CHEBI:29035"/>
        <label>2</label>
    </ligand>
</feature>